<keyword id="KW-1003">Cell membrane</keyword>
<keyword id="KW-0966">Cell projection</keyword>
<keyword id="KW-0175">Coiled coil</keyword>
<keyword id="KW-0963">Cytoplasm</keyword>
<keyword id="KW-0206">Cytoskeleton</keyword>
<keyword id="KW-0254">Endocytosis</keyword>
<keyword id="KW-0967">Endosome</keyword>
<keyword id="KW-0440">LIM domain</keyword>
<keyword id="KW-0472">Membrane</keyword>
<keyword id="KW-0479">Metal-binding</keyword>
<keyword id="KW-0597">Phosphoprotein</keyword>
<keyword id="KW-0653">Protein transport</keyword>
<keyword id="KW-1185">Reference proteome</keyword>
<keyword id="KW-0813">Transport</keyword>
<keyword id="KW-0862">Zinc</keyword>
<dbReference type="EMBL" id="AABR06052007">
    <property type="status" value="NOT_ANNOTATED_CDS"/>
    <property type="molecule type" value="Genomic_DNA"/>
</dbReference>
<dbReference type="RefSeq" id="NP_001406561.1">
    <property type="nucleotide sequence ID" value="NM_001419632.1"/>
</dbReference>
<dbReference type="RefSeq" id="XP_002726994.2">
    <property type="nucleotide sequence ID" value="XM_002726948.3"/>
</dbReference>
<dbReference type="RefSeq" id="XP_002729878.2">
    <property type="nucleotide sequence ID" value="XM_002729832.4"/>
</dbReference>
<dbReference type="SMR" id="D3ZQL6"/>
<dbReference type="FunCoup" id="D3ZQL6">
    <property type="interactions" value="1782"/>
</dbReference>
<dbReference type="STRING" id="10116.ENSRNOP00000034618"/>
<dbReference type="GlyGen" id="D3ZQL6">
    <property type="glycosylation" value="4 sites"/>
</dbReference>
<dbReference type="iPTMnet" id="D3ZQL6"/>
<dbReference type="PhosphoSitePlus" id="D3ZQL6"/>
<dbReference type="PaxDb" id="10116-ENSRNOP00000034618"/>
<dbReference type="PeptideAtlas" id="D3ZQL6"/>
<dbReference type="Ensembl" id="ENSRNOT00000036357.7">
    <property type="protein sequence ID" value="ENSRNOP00000034618.4"/>
    <property type="gene ID" value="ENSRNOG00000026212.7"/>
</dbReference>
<dbReference type="GeneID" id="362958"/>
<dbReference type="UCSC" id="RGD:1305415">
    <property type="organism name" value="rat"/>
</dbReference>
<dbReference type="AGR" id="RGD:1305415"/>
<dbReference type="RGD" id="1305415">
    <property type="gene designation" value="Micall1"/>
</dbReference>
<dbReference type="eggNOG" id="ENOG502QWQX">
    <property type="taxonomic scope" value="Eukaryota"/>
</dbReference>
<dbReference type="GeneTree" id="ENSGT00940000156057"/>
<dbReference type="HOGENOM" id="CLU_015382_1_0_1"/>
<dbReference type="InParanoid" id="D3ZQL6"/>
<dbReference type="PhylomeDB" id="D3ZQL6"/>
<dbReference type="TreeFam" id="TF328311"/>
<dbReference type="PRO" id="PR:D3ZQL6"/>
<dbReference type="Proteomes" id="UP000002494">
    <property type="component" value="Chromosome 7"/>
</dbReference>
<dbReference type="Bgee" id="ENSRNOG00000026212">
    <property type="expression patterns" value="Expressed in heart and 19 other cell types or tissues"/>
</dbReference>
<dbReference type="GO" id="GO:0005814">
    <property type="term" value="C:centriole"/>
    <property type="evidence" value="ECO:0000250"/>
    <property type="project" value="UniProtKB"/>
</dbReference>
<dbReference type="GO" id="GO:0060170">
    <property type="term" value="C:ciliary membrane"/>
    <property type="evidence" value="ECO:0007669"/>
    <property type="project" value="UniProtKB-SubCell"/>
</dbReference>
<dbReference type="GO" id="GO:0005929">
    <property type="term" value="C:cilium"/>
    <property type="evidence" value="ECO:0000250"/>
    <property type="project" value="UniProtKB"/>
</dbReference>
<dbReference type="GO" id="GO:0010009">
    <property type="term" value="C:cytoplasmic side of endosome membrane"/>
    <property type="evidence" value="ECO:0000250"/>
    <property type="project" value="UniProtKB"/>
</dbReference>
<dbReference type="GO" id="GO:0010008">
    <property type="term" value="C:endosome membrane"/>
    <property type="evidence" value="ECO:0000314"/>
    <property type="project" value="UniProtKB"/>
</dbReference>
<dbReference type="GO" id="GO:0005770">
    <property type="term" value="C:late endosome"/>
    <property type="evidence" value="ECO:0000250"/>
    <property type="project" value="UniProtKB"/>
</dbReference>
<dbReference type="GO" id="GO:0031902">
    <property type="term" value="C:late endosome membrane"/>
    <property type="evidence" value="ECO:0007669"/>
    <property type="project" value="UniProtKB-SubCell"/>
</dbReference>
<dbReference type="GO" id="GO:0055038">
    <property type="term" value="C:recycling endosome membrane"/>
    <property type="evidence" value="ECO:0000250"/>
    <property type="project" value="UniProtKB"/>
</dbReference>
<dbReference type="GO" id="GO:0008093">
    <property type="term" value="F:cytoskeletal anchor activity"/>
    <property type="evidence" value="ECO:0000250"/>
    <property type="project" value="UniProtKB"/>
</dbReference>
<dbReference type="GO" id="GO:0042802">
    <property type="term" value="F:identical protein binding"/>
    <property type="evidence" value="ECO:0000266"/>
    <property type="project" value="RGD"/>
</dbReference>
<dbReference type="GO" id="GO:0046872">
    <property type="term" value="F:metal ion binding"/>
    <property type="evidence" value="ECO:0007669"/>
    <property type="project" value="UniProtKB-KW"/>
</dbReference>
<dbReference type="GO" id="GO:0070300">
    <property type="term" value="F:phosphatidic acid binding"/>
    <property type="evidence" value="ECO:0000250"/>
    <property type="project" value="UniProtKB"/>
</dbReference>
<dbReference type="GO" id="GO:0031267">
    <property type="term" value="F:small GTPase binding"/>
    <property type="evidence" value="ECO:0000266"/>
    <property type="project" value="RGD"/>
</dbReference>
<dbReference type="GO" id="GO:1990090">
    <property type="term" value="P:cellular response to nerve growth factor stimulus"/>
    <property type="evidence" value="ECO:0000314"/>
    <property type="project" value="UniProtKB"/>
</dbReference>
<dbReference type="GO" id="GO:0060271">
    <property type="term" value="P:cilium assembly"/>
    <property type="evidence" value="ECO:0000250"/>
    <property type="project" value="UniProtKB"/>
</dbReference>
<dbReference type="GO" id="GO:0032456">
    <property type="term" value="P:endocytic recycling"/>
    <property type="evidence" value="ECO:0000250"/>
    <property type="project" value="UniProtKB"/>
</dbReference>
<dbReference type="GO" id="GO:0006897">
    <property type="term" value="P:endocytosis"/>
    <property type="evidence" value="ECO:0000250"/>
    <property type="project" value="UniProtKB"/>
</dbReference>
<dbReference type="GO" id="GO:0031175">
    <property type="term" value="P:neuron projection development"/>
    <property type="evidence" value="ECO:0000315"/>
    <property type="project" value="UniProtKB"/>
</dbReference>
<dbReference type="GO" id="GO:0097320">
    <property type="term" value="P:plasma membrane tubulation"/>
    <property type="evidence" value="ECO:0000250"/>
    <property type="project" value="UniProtKB"/>
</dbReference>
<dbReference type="GO" id="GO:0061512">
    <property type="term" value="P:protein localization to cilium"/>
    <property type="evidence" value="ECO:0000250"/>
    <property type="project" value="UniProtKB"/>
</dbReference>
<dbReference type="GO" id="GO:0036010">
    <property type="term" value="P:protein localization to endosome"/>
    <property type="evidence" value="ECO:0000315"/>
    <property type="project" value="UniProtKB"/>
</dbReference>
<dbReference type="GO" id="GO:0006612">
    <property type="term" value="P:protein targeting to membrane"/>
    <property type="evidence" value="ECO:0000250"/>
    <property type="project" value="UniProtKB"/>
</dbReference>
<dbReference type="GO" id="GO:0015031">
    <property type="term" value="P:protein transport"/>
    <property type="evidence" value="ECO:0007669"/>
    <property type="project" value="UniProtKB-KW"/>
</dbReference>
<dbReference type="GO" id="GO:0006898">
    <property type="term" value="P:receptor-mediated endocytosis"/>
    <property type="evidence" value="ECO:0000250"/>
    <property type="project" value="UniProtKB"/>
</dbReference>
<dbReference type="GO" id="GO:0032458">
    <property type="term" value="P:slow endocytic recycling"/>
    <property type="evidence" value="ECO:0000250"/>
    <property type="project" value="UniProtKB"/>
</dbReference>
<dbReference type="CDD" id="cd21252">
    <property type="entry name" value="CH_MICALL1"/>
    <property type="match status" value="1"/>
</dbReference>
<dbReference type="CDD" id="cd09444">
    <property type="entry name" value="LIM_Mical_like_1"/>
    <property type="match status" value="1"/>
</dbReference>
<dbReference type="FunFam" id="2.10.110.10:FF:000100">
    <property type="entry name" value="MICAL-like protein 1"/>
    <property type="match status" value="1"/>
</dbReference>
<dbReference type="FunFam" id="1.10.418.10:FF:000055">
    <property type="entry name" value="MICAL-like protein 2"/>
    <property type="match status" value="1"/>
</dbReference>
<dbReference type="Gene3D" id="1.10.418.10">
    <property type="entry name" value="Calponin-like domain"/>
    <property type="match status" value="1"/>
</dbReference>
<dbReference type="Gene3D" id="2.10.110.10">
    <property type="entry name" value="Cysteine Rich Protein"/>
    <property type="match status" value="1"/>
</dbReference>
<dbReference type="InterPro" id="IPR022735">
    <property type="entry name" value="bMERB_dom"/>
</dbReference>
<dbReference type="InterPro" id="IPR001715">
    <property type="entry name" value="CH_dom"/>
</dbReference>
<dbReference type="InterPro" id="IPR036872">
    <property type="entry name" value="CH_dom_sf"/>
</dbReference>
<dbReference type="InterPro" id="IPR050540">
    <property type="entry name" value="F-actin_Monoox_Mical"/>
</dbReference>
<dbReference type="InterPro" id="IPR001781">
    <property type="entry name" value="Znf_LIM"/>
</dbReference>
<dbReference type="PANTHER" id="PTHR23167">
    <property type="entry name" value="CALPONIN HOMOLOGY DOMAIN-CONTAINING PROTEIN DDB_G0272472-RELATED"/>
    <property type="match status" value="1"/>
</dbReference>
<dbReference type="PANTHER" id="PTHR23167:SF89">
    <property type="entry name" value="MICAL-LIKE PROTEIN 1"/>
    <property type="match status" value="1"/>
</dbReference>
<dbReference type="Pfam" id="PF12130">
    <property type="entry name" value="bMERB_dom"/>
    <property type="match status" value="1"/>
</dbReference>
<dbReference type="Pfam" id="PF00307">
    <property type="entry name" value="CH"/>
    <property type="match status" value="1"/>
</dbReference>
<dbReference type="Pfam" id="PF00412">
    <property type="entry name" value="LIM"/>
    <property type="match status" value="1"/>
</dbReference>
<dbReference type="SMART" id="SM00033">
    <property type="entry name" value="CH"/>
    <property type="match status" value="1"/>
</dbReference>
<dbReference type="SMART" id="SM01203">
    <property type="entry name" value="DUF3585"/>
    <property type="match status" value="1"/>
</dbReference>
<dbReference type="SMART" id="SM00132">
    <property type="entry name" value="LIM"/>
    <property type="match status" value="1"/>
</dbReference>
<dbReference type="SUPFAM" id="SSF47576">
    <property type="entry name" value="Calponin-homology domain, CH-domain"/>
    <property type="match status" value="1"/>
</dbReference>
<dbReference type="SUPFAM" id="SSF57716">
    <property type="entry name" value="Glucocorticoid receptor-like (DNA-binding domain)"/>
    <property type="match status" value="2"/>
</dbReference>
<dbReference type="PROSITE" id="PS51848">
    <property type="entry name" value="BMERB"/>
    <property type="match status" value="1"/>
</dbReference>
<dbReference type="PROSITE" id="PS50021">
    <property type="entry name" value="CH"/>
    <property type="match status" value="1"/>
</dbReference>
<dbReference type="PROSITE" id="PS00478">
    <property type="entry name" value="LIM_DOMAIN_1"/>
    <property type="match status" value="1"/>
</dbReference>
<dbReference type="PROSITE" id="PS50023">
    <property type="entry name" value="LIM_DOMAIN_2"/>
    <property type="match status" value="1"/>
</dbReference>
<reference key="1">
    <citation type="journal article" date="2004" name="Nature">
        <title>Genome sequence of the Brown Norway rat yields insights into mammalian evolution.</title>
        <authorList>
            <person name="Gibbs R.A."/>
            <person name="Weinstock G.M."/>
            <person name="Metzker M.L."/>
            <person name="Muzny D.M."/>
            <person name="Sodergren E.J."/>
            <person name="Scherer S."/>
            <person name="Scott G."/>
            <person name="Steffen D."/>
            <person name="Worley K.C."/>
            <person name="Burch P.E."/>
            <person name="Okwuonu G."/>
            <person name="Hines S."/>
            <person name="Lewis L."/>
            <person name="Deramo C."/>
            <person name="Delgado O."/>
            <person name="Dugan-Rocha S."/>
            <person name="Miner G."/>
            <person name="Morgan M."/>
            <person name="Hawes A."/>
            <person name="Gill R."/>
            <person name="Holt R.A."/>
            <person name="Adams M.D."/>
            <person name="Amanatides P.G."/>
            <person name="Baden-Tillson H."/>
            <person name="Barnstead M."/>
            <person name="Chin S."/>
            <person name="Evans C.A."/>
            <person name="Ferriera S."/>
            <person name="Fosler C."/>
            <person name="Glodek A."/>
            <person name="Gu Z."/>
            <person name="Jennings D."/>
            <person name="Kraft C.L."/>
            <person name="Nguyen T."/>
            <person name="Pfannkoch C.M."/>
            <person name="Sitter C."/>
            <person name="Sutton G.G."/>
            <person name="Venter J.C."/>
            <person name="Woodage T."/>
            <person name="Smith D."/>
            <person name="Lee H.-M."/>
            <person name="Gustafson E."/>
            <person name="Cahill P."/>
            <person name="Kana A."/>
            <person name="Doucette-Stamm L."/>
            <person name="Weinstock K."/>
            <person name="Fechtel K."/>
            <person name="Weiss R.B."/>
            <person name="Dunn D.M."/>
            <person name="Green E.D."/>
            <person name="Blakesley R.W."/>
            <person name="Bouffard G.G."/>
            <person name="De Jong P.J."/>
            <person name="Osoegawa K."/>
            <person name="Zhu B."/>
            <person name="Marra M."/>
            <person name="Schein J."/>
            <person name="Bosdet I."/>
            <person name="Fjell C."/>
            <person name="Jones S."/>
            <person name="Krzywinski M."/>
            <person name="Mathewson C."/>
            <person name="Siddiqui A."/>
            <person name="Wye N."/>
            <person name="McPherson J."/>
            <person name="Zhao S."/>
            <person name="Fraser C.M."/>
            <person name="Shetty J."/>
            <person name="Shatsman S."/>
            <person name="Geer K."/>
            <person name="Chen Y."/>
            <person name="Abramzon S."/>
            <person name="Nierman W.C."/>
            <person name="Havlak P.H."/>
            <person name="Chen R."/>
            <person name="Durbin K.J."/>
            <person name="Egan A."/>
            <person name="Ren Y."/>
            <person name="Song X.-Z."/>
            <person name="Li B."/>
            <person name="Liu Y."/>
            <person name="Qin X."/>
            <person name="Cawley S."/>
            <person name="Cooney A.J."/>
            <person name="D'Souza L.M."/>
            <person name="Martin K."/>
            <person name="Wu J.Q."/>
            <person name="Gonzalez-Garay M.L."/>
            <person name="Jackson A.R."/>
            <person name="Kalafus K.J."/>
            <person name="McLeod M.P."/>
            <person name="Milosavljevic A."/>
            <person name="Virk D."/>
            <person name="Volkov A."/>
            <person name="Wheeler D.A."/>
            <person name="Zhang Z."/>
            <person name="Bailey J.A."/>
            <person name="Eichler E.E."/>
            <person name="Tuzun E."/>
            <person name="Birney E."/>
            <person name="Mongin E."/>
            <person name="Ureta-Vidal A."/>
            <person name="Woodwark C."/>
            <person name="Zdobnov E."/>
            <person name="Bork P."/>
            <person name="Suyama M."/>
            <person name="Torrents D."/>
            <person name="Alexandersson M."/>
            <person name="Trask B.J."/>
            <person name="Young J.M."/>
            <person name="Huang H."/>
            <person name="Wang H."/>
            <person name="Xing H."/>
            <person name="Daniels S."/>
            <person name="Gietzen D."/>
            <person name="Schmidt J."/>
            <person name="Stevens K."/>
            <person name="Vitt U."/>
            <person name="Wingrove J."/>
            <person name="Camara F."/>
            <person name="Mar Alba M."/>
            <person name="Abril J.F."/>
            <person name="Guigo R."/>
            <person name="Smit A."/>
            <person name="Dubchak I."/>
            <person name="Rubin E.M."/>
            <person name="Couronne O."/>
            <person name="Poliakov A."/>
            <person name="Huebner N."/>
            <person name="Ganten D."/>
            <person name="Goesele C."/>
            <person name="Hummel O."/>
            <person name="Kreitler T."/>
            <person name="Lee Y.-A."/>
            <person name="Monti J."/>
            <person name="Schulz H."/>
            <person name="Zimdahl H."/>
            <person name="Himmelbauer H."/>
            <person name="Lehrach H."/>
            <person name="Jacob H.J."/>
            <person name="Bromberg S."/>
            <person name="Gullings-Handley J."/>
            <person name="Jensen-Seaman M.I."/>
            <person name="Kwitek A.E."/>
            <person name="Lazar J."/>
            <person name="Pasko D."/>
            <person name="Tonellato P.J."/>
            <person name="Twigger S."/>
            <person name="Ponting C.P."/>
            <person name="Duarte J.M."/>
            <person name="Rice S."/>
            <person name="Goodstadt L."/>
            <person name="Beatson S.A."/>
            <person name="Emes R.D."/>
            <person name="Winter E.E."/>
            <person name="Webber C."/>
            <person name="Brandt P."/>
            <person name="Nyakatura G."/>
            <person name="Adetobi M."/>
            <person name="Chiaromonte F."/>
            <person name="Elnitski L."/>
            <person name="Eswara P."/>
            <person name="Hardison R.C."/>
            <person name="Hou M."/>
            <person name="Kolbe D."/>
            <person name="Makova K."/>
            <person name="Miller W."/>
            <person name="Nekrutenko A."/>
            <person name="Riemer C."/>
            <person name="Schwartz S."/>
            <person name="Taylor J."/>
            <person name="Yang S."/>
            <person name="Zhang Y."/>
            <person name="Lindpaintner K."/>
            <person name="Andrews T.D."/>
            <person name="Caccamo M."/>
            <person name="Clamp M."/>
            <person name="Clarke L."/>
            <person name="Curwen V."/>
            <person name="Durbin R.M."/>
            <person name="Eyras E."/>
            <person name="Searle S.M."/>
            <person name="Cooper G.M."/>
            <person name="Batzoglou S."/>
            <person name="Brudno M."/>
            <person name="Sidow A."/>
            <person name="Stone E.A."/>
            <person name="Payseur B.A."/>
            <person name="Bourque G."/>
            <person name="Lopez-Otin C."/>
            <person name="Puente X.S."/>
            <person name="Chakrabarti K."/>
            <person name="Chatterji S."/>
            <person name="Dewey C."/>
            <person name="Pachter L."/>
            <person name="Bray N."/>
            <person name="Yap V.B."/>
            <person name="Caspi A."/>
            <person name="Tesler G."/>
            <person name="Pevzner P.A."/>
            <person name="Haussler D."/>
            <person name="Roskin K.M."/>
            <person name="Baertsch R."/>
            <person name="Clawson H."/>
            <person name="Furey T.S."/>
            <person name="Hinrichs A.S."/>
            <person name="Karolchik D."/>
            <person name="Kent W.J."/>
            <person name="Rosenbloom K.R."/>
            <person name="Trumbower H."/>
            <person name="Weirauch M."/>
            <person name="Cooper D.N."/>
            <person name="Stenson P.D."/>
            <person name="Ma B."/>
            <person name="Brent M."/>
            <person name="Arumugam M."/>
            <person name="Shteynberg D."/>
            <person name="Copley R.R."/>
            <person name="Taylor M.S."/>
            <person name="Riethman H."/>
            <person name="Mudunuri U."/>
            <person name="Peterson J."/>
            <person name="Guyer M."/>
            <person name="Felsenfeld A."/>
            <person name="Old S."/>
            <person name="Mockrin S."/>
            <person name="Collins F.S."/>
        </authorList>
    </citation>
    <scope>NUCLEOTIDE SEQUENCE [LARGE SCALE GENOMIC DNA]</scope>
    <source>
        <strain>Brown Norway</strain>
    </source>
</reference>
<reference key="2">
    <citation type="journal article" date="2012" name="Nat. Commun.">
        <title>Quantitative maps of protein phosphorylation sites across 14 different rat organs and tissues.</title>
        <authorList>
            <person name="Lundby A."/>
            <person name="Secher A."/>
            <person name="Lage K."/>
            <person name="Nordsborg N.B."/>
            <person name="Dmytriyev A."/>
            <person name="Lundby C."/>
            <person name="Olsen J.V."/>
        </authorList>
    </citation>
    <scope>PHOSPHORYLATION [LARGE SCALE ANALYSIS] AT THR-461; SER-480 AND SER-682</scope>
    <scope>IDENTIFICATION BY MASS SPECTROMETRY [LARGE SCALE ANALYSIS]</scope>
</reference>
<reference key="3">
    <citation type="journal article" date="2013" name="J. Cell Sci.">
        <title>Rab35 establishes the EHD1-association site by coordinating two distinct effectors during neurite outgrowth.</title>
        <authorList>
            <person name="Kobayashi H."/>
            <person name="Fukuda M."/>
        </authorList>
    </citation>
    <scope>FUNCTION IN NEURITE OUTGROWTH</scope>
    <scope>INTERACTION WITH EHD1 AND RAB35</scope>
</reference>
<gene>
    <name type="primary">Micall1</name>
</gene>
<name>MILK1_RAT</name>
<evidence type="ECO:0000250" key="1"/>
<evidence type="ECO:0000250" key="2">
    <source>
        <dbReference type="UniProtKB" id="Q8BGT6"/>
    </source>
</evidence>
<evidence type="ECO:0000250" key="3">
    <source>
        <dbReference type="UniProtKB" id="Q8N3F8"/>
    </source>
</evidence>
<evidence type="ECO:0000255" key="4"/>
<evidence type="ECO:0000255" key="5">
    <source>
        <dbReference type="PROSITE-ProRule" id="PRU00044"/>
    </source>
</evidence>
<evidence type="ECO:0000255" key="6">
    <source>
        <dbReference type="PROSITE-ProRule" id="PRU00125"/>
    </source>
</evidence>
<evidence type="ECO:0000255" key="7">
    <source>
        <dbReference type="PROSITE-ProRule" id="PRU01195"/>
    </source>
</evidence>
<evidence type="ECO:0000256" key="8">
    <source>
        <dbReference type="SAM" id="MobiDB-lite"/>
    </source>
</evidence>
<evidence type="ECO:0000269" key="9">
    <source>
    </source>
</evidence>
<evidence type="ECO:0000305" key="10"/>
<evidence type="ECO:0007744" key="11">
    <source>
    </source>
</evidence>
<feature type="chain" id="PRO_0000424557" description="MICAL-like protein 1">
    <location>
        <begin position="1"/>
        <end position="855"/>
    </location>
</feature>
<feature type="domain" description="Calponin-homology (CH)" evidence="5">
    <location>
        <begin position="2"/>
        <end position="108"/>
    </location>
</feature>
<feature type="domain" description="LIM zinc-binding" evidence="6">
    <location>
        <begin position="163"/>
        <end position="226"/>
    </location>
</feature>
<feature type="domain" description="bMERB" evidence="7">
    <location>
        <begin position="663"/>
        <end position="810"/>
    </location>
</feature>
<feature type="region of interest" description="Disordered" evidence="8">
    <location>
        <begin position="110"/>
        <end position="165"/>
    </location>
</feature>
<feature type="region of interest" description="Disordered" evidence="8">
    <location>
        <begin position="226"/>
        <end position="253"/>
    </location>
</feature>
<feature type="region of interest" description="Disordered" evidence="8">
    <location>
        <begin position="269"/>
        <end position="659"/>
    </location>
</feature>
<feature type="region of interest" description="Mediates the interaction with RAB13 and intramolecular interaction with the calponin-homology (CH) domain" evidence="1">
    <location>
        <begin position="644"/>
        <end position="855"/>
    </location>
</feature>
<feature type="region of interest" description="Necessary and sufficient to associate with tubular recycling endosome membranes, mediate phosphatidic acid-binding and membrane tubulation" evidence="1">
    <location>
        <begin position="692"/>
        <end position="855"/>
    </location>
</feature>
<feature type="region of interest" description="Disordered" evidence="8">
    <location>
        <begin position="815"/>
        <end position="855"/>
    </location>
</feature>
<feature type="coiled-coil region" evidence="4">
    <location>
        <begin position="679"/>
        <end position="703"/>
    </location>
</feature>
<feature type="coiled-coil region" evidence="4">
    <location>
        <begin position="794"/>
        <end position="822"/>
    </location>
</feature>
<feature type="short sequence motif" description="NPF1">
    <location>
        <begin position="423"/>
        <end position="425"/>
    </location>
</feature>
<feature type="short sequence motif" description="NPF2">
    <location>
        <begin position="625"/>
        <end position="627"/>
    </location>
</feature>
<feature type="compositionally biased region" description="Low complexity" evidence="8">
    <location>
        <begin position="124"/>
        <end position="135"/>
    </location>
</feature>
<feature type="compositionally biased region" description="Polar residues" evidence="8">
    <location>
        <begin position="269"/>
        <end position="278"/>
    </location>
</feature>
<feature type="compositionally biased region" description="Polar residues" evidence="8">
    <location>
        <begin position="308"/>
        <end position="325"/>
    </location>
</feature>
<feature type="compositionally biased region" description="Basic and acidic residues" evidence="8">
    <location>
        <begin position="356"/>
        <end position="367"/>
    </location>
</feature>
<feature type="compositionally biased region" description="Acidic residues" evidence="8">
    <location>
        <begin position="425"/>
        <end position="434"/>
    </location>
</feature>
<feature type="compositionally biased region" description="Pro residues" evidence="8">
    <location>
        <begin position="439"/>
        <end position="449"/>
    </location>
</feature>
<feature type="compositionally biased region" description="Low complexity" evidence="8">
    <location>
        <begin position="499"/>
        <end position="514"/>
    </location>
</feature>
<feature type="compositionally biased region" description="Polar residues" evidence="8">
    <location>
        <begin position="542"/>
        <end position="554"/>
    </location>
</feature>
<feature type="compositionally biased region" description="Low complexity" evidence="8">
    <location>
        <begin position="555"/>
        <end position="570"/>
    </location>
</feature>
<feature type="compositionally biased region" description="Basic and acidic residues" evidence="8">
    <location>
        <begin position="815"/>
        <end position="826"/>
    </location>
</feature>
<feature type="modified residue" description="Phosphoserine" evidence="3">
    <location>
        <position position="293"/>
    </location>
</feature>
<feature type="modified residue" description="Phosphoserine" evidence="3">
    <location>
        <position position="307"/>
    </location>
</feature>
<feature type="modified residue" description="Phosphothreonine" evidence="2">
    <location>
        <position position="313"/>
    </location>
</feature>
<feature type="modified residue" description="Phosphothreonine" evidence="3">
    <location>
        <position position="316"/>
    </location>
</feature>
<feature type="modified residue" description="Phosphothreonine" evidence="11">
    <location>
        <position position="461"/>
    </location>
</feature>
<feature type="modified residue" description="Phosphothreonine" evidence="3">
    <location>
        <position position="463"/>
    </location>
</feature>
<feature type="modified residue" description="Phosphoserine" evidence="3">
    <location>
        <position position="464"/>
    </location>
</feature>
<feature type="modified residue" description="Phosphoserine" evidence="3">
    <location>
        <position position="465"/>
    </location>
</feature>
<feature type="modified residue" description="Phosphoserine" evidence="3">
    <location>
        <position position="478"/>
    </location>
</feature>
<feature type="modified residue" description="Phosphoserine" evidence="11">
    <location>
        <position position="480"/>
    </location>
</feature>
<feature type="modified residue" description="Phosphoserine" evidence="3">
    <location>
        <position position="613"/>
    </location>
</feature>
<feature type="modified residue" description="Phosphoserine" evidence="11">
    <location>
        <position position="682"/>
    </location>
</feature>
<feature type="modified residue" description="Phosphoserine" evidence="2">
    <location>
        <position position="732"/>
    </location>
</feature>
<organism>
    <name type="scientific">Rattus norvegicus</name>
    <name type="common">Rat</name>
    <dbReference type="NCBI Taxonomy" id="10116"/>
    <lineage>
        <taxon>Eukaryota</taxon>
        <taxon>Metazoa</taxon>
        <taxon>Chordata</taxon>
        <taxon>Craniata</taxon>
        <taxon>Vertebrata</taxon>
        <taxon>Euteleostomi</taxon>
        <taxon>Mammalia</taxon>
        <taxon>Eutheria</taxon>
        <taxon>Euarchontoglires</taxon>
        <taxon>Glires</taxon>
        <taxon>Rodentia</taxon>
        <taxon>Myomorpha</taxon>
        <taxon>Muroidea</taxon>
        <taxon>Muridae</taxon>
        <taxon>Murinae</taxon>
        <taxon>Rattus</taxon>
    </lineage>
</organism>
<protein>
    <recommendedName>
        <fullName>MICAL-like protein 1</fullName>
    </recommendedName>
</protein>
<accession>D3ZQL6</accession>
<proteinExistence type="evidence at protein level"/>
<sequence>MAGPRGALLAWCRRQCEGYRGVDIRDLSSSFRDGLAFCAILHRHRPDLLDFQSLSKENVFENNRLAFEVAEKELGIPALLDPNDMVSMSVPDCLSIMTYVSQYYNHFTSSGQAAASPPKPGKDPAAPSPTSTSPAVQPGEEAQGDDLSPDSLSEQGKPQPPSSACAACGQRVHLVQRYLAEGRLYHRHCFRCRQCSSTLVPGSYSSGPEEGTFVCAERCTRLGLGGRSGTRPLSLQKQQPAAAAEAKDGEDSDLSKSVVVVAAEADGLQASSEVQPHTLTKPPLPSKPQDLASPPVSRPTPAPRKASESSALTPPTPRPRSSLQQDGMVEQSVSGDLVNGRLQELPVPKPRGTPKLSERMTAPRKDPPWITLVQTEPKKKPAPLPPSSGPGPLSQASRQVENGGLEEKTQKSPAAEPEPKPYNPFEEEEEEEEASVPAVPSPAPAPPETTPKSLHPWYNITPTSSPKTKKRPAPKAPSASPLVLHASRLSHSEPPSATPSPALSVESLSSESSSHTANTEPSEPPAVPKSSSDPAVHVPGTPGTSANSVTPSAHSSLSSSGELGQPSGEQMPQARTRGSPGTHSTKPFSGATPTPFLLAGDQKSPAPPMGSSSPQMLIKSSCKENPFNRKPSPSTSPTVRKATKGAKPVRPPAPGHGFPLIKRKVQADQYIPEEDIYGEMDSIERQLDALEHSGVLLEEKLRGGANEGSEDDMLVDWFKLIHEKHLLVRRESELIYVFKQQNLEQRQADVEFELRCLLNKPEKDWTDDDRAREKVLMQELMTLIEQRDAIVNCLDEDRQREEEEDKMLETMIKKKDFQREAESDSKKKGKFKTMKVLKLLGNKRDAKSKAPTGKS</sequence>
<comment type="function">
    <text evidence="3 9">Lipid-binding protein with higher affinity for phosphatidic acid, a lipid enriched in recycling endosome membranes. On endosome membranes, acts as a downstream effector of Rab proteins recruiting cytosolic proteins to regulate membrane tubulation. Involved in a late step of receptor-mediated endocytosis regulating for instance endocytosed-EGF receptor trafficking. Alternatively, regulates slow endocytic recycling of endocytosed proteins back to the plasma membrane. Also involved in cargo protein delivery to the plasma membrane. Plays a role in ciliogenesis coordination, recruits EHD1 to primary cilium where it is anchored to the centriole through interaction with tubulins (By similarity). May indirectly play a role in neurite outgrowth (PubMed:23572513).</text>
</comment>
<comment type="subunit">
    <text evidence="9 10">Homooligomer (Probable). Interacts (via NPF1 motif) with EHD1 (via EH domain); the interaction is direct and probably recruits EHD1 to membranes. Interacts with EHD3 (via EH domain). Interacts with RAB35 (GTP-bound form); the interaction is direct and probably recruits MICALL1 to membranes. Interacts with ACAP2; the interaction is indirect through RAB35. Interacts with RAB8A (GTP-bound form); regulates RAB8A association with recycling endosomes. Interacts with RAB13 (GTP-bound form). Interacts with ARF6 (GTP-bound form). Interacts with PACSIN2 (via the SH3 domain). Interacts with DPYSL2.</text>
</comment>
<comment type="subcellular location">
    <subcellularLocation>
        <location evidence="3">Recycling endosome membrane</location>
        <topology evidence="3">Peripheral membrane protein</topology>
    </subcellularLocation>
    <subcellularLocation>
        <location evidence="3">Late endosome membrane</location>
    </subcellularLocation>
    <subcellularLocation>
        <location evidence="3">Cell projection</location>
        <location evidence="3">Cilium membrane</location>
        <topology evidence="3">Peripheral membrane protein</topology>
    </subcellularLocation>
    <subcellularLocation>
        <location evidence="3">Cytoplasm</location>
        <location evidence="3">Cytoskeleton</location>
        <location evidence="3">Microtubule organizing center</location>
        <location evidence="3">Centrosome</location>
        <location evidence="3">Centriole</location>
    </subcellularLocation>
    <text evidence="3">Localization to late endosomes is actin-dependent. Association to tubular recycling endosomes is regulated by RAB35 and ARF6. Interaction with tubulins achors MICALL1 to the centriole.</text>
</comment>
<comment type="domain">
    <text evidence="3">Probably exists in a closed and an opened conformation due to interaction of the C-terminal RAB-binding domain (RBD), also described as bivalent Mical/EHBP Rab binding (bMERB) domain, with the N-terminal calponin-homology (CH) domain. The conformational change is regulated by RAB13 and may modulate MICALL1 interactions with functional partners.</text>
</comment>